<accession>P70120</accession>
<accession>Q8BVI1</accession>
<protein>
    <recommendedName>
        <fullName>Transcription factor HES-5</fullName>
    </recommendedName>
    <alternativeName>
        <fullName>Hairy and enhancer of split 5</fullName>
    </alternativeName>
</protein>
<organism>
    <name type="scientific">Mus musculus</name>
    <name type="common">Mouse</name>
    <dbReference type="NCBI Taxonomy" id="10090"/>
    <lineage>
        <taxon>Eukaryota</taxon>
        <taxon>Metazoa</taxon>
        <taxon>Chordata</taxon>
        <taxon>Craniata</taxon>
        <taxon>Vertebrata</taxon>
        <taxon>Euteleostomi</taxon>
        <taxon>Mammalia</taxon>
        <taxon>Eutheria</taxon>
        <taxon>Euarchontoglires</taxon>
        <taxon>Glires</taxon>
        <taxon>Rodentia</taxon>
        <taxon>Myomorpha</taxon>
        <taxon>Muroidea</taxon>
        <taxon>Muridae</taxon>
        <taxon>Murinae</taxon>
        <taxon>Mus</taxon>
        <taxon>Mus</taxon>
    </lineage>
</organism>
<dbReference type="EMBL" id="D32132">
    <property type="protein sequence ID" value="BAA06858.1"/>
    <property type="molecule type" value="Genomic_DNA"/>
</dbReference>
<dbReference type="EMBL" id="AK078170">
    <property type="protein sequence ID" value="BAC37159.1"/>
    <property type="molecule type" value="mRNA"/>
</dbReference>
<dbReference type="EMBL" id="AK087508">
    <property type="protein sequence ID" value="BAC39904.1"/>
    <property type="molecule type" value="mRNA"/>
</dbReference>
<dbReference type="CCDS" id="CCDS19018.1"/>
<dbReference type="PIR" id="A55438">
    <property type="entry name" value="A55438"/>
</dbReference>
<dbReference type="RefSeq" id="NP_034549.1">
    <property type="nucleotide sequence ID" value="NM_010419.4"/>
</dbReference>
<dbReference type="SMR" id="P70120"/>
<dbReference type="BioGRID" id="200278">
    <property type="interactions" value="2"/>
</dbReference>
<dbReference type="ELM" id="P70120"/>
<dbReference type="FunCoup" id="P70120">
    <property type="interactions" value="1236"/>
</dbReference>
<dbReference type="STRING" id="10090.ENSMUSP00000051118"/>
<dbReference type="iPTMnet" id="P70120"/>
<dbReference type="PhosphoSitePlus" id="P70120"/>
<dbReference type="PaxDb" id="10090-ENSMUSP00000051118"/>
<dbReference type="PeptideAtlas" id="P70120"/>
<dbReference type="Antibodypedia" id="26785">
    <property type="antibodies" value="214 antibodies from 36 providers"/>
</dbReference>
<dbReference type="DNASU" id="15208"/>
<dbReference type="Ensembl" id="ENSMUST00000049621.7">
    <property type="protein sequence ID" value="ENSMUSP00000051118.7"/>
    <property type="gene ID" value="ENSMUSG00000048001.8"/>
</dbReference>
<dbReference type="GeneID" id="15208"/>
<dbReference type="KEGG" id="mmu:15208"/>
<dbReference type="UCSC" id="uc008wck.1">
    <property type="organism name" value="mouse"/>
</dbReference>
<dbReference type="AGR" id="MGI:104876"/>
<dbReference type="CTD" id="388585"/>
<dbReference type="MGI" id="MGI:104876">
    <property type="gene designation" value="Hes5"/>
</dbReference>
<dbReference type="VEuPathDB" id="HostDB:ENSMUSG00000048001"/>
<dbReference type="eggNOG" id="ENOG502S6S1">
    <property type="taxonomic scope" value="Eukaryota"/>
</dbReference>
<dbReference type="GeneTree" id="ENSGT00940000162836"/>
<dbReference type="HOGENOM" id="CLU_068550_3_1_1"/>
<dbReference type="InParanoid" id="P70120"/>
<dbReference type="OMA" id="MKLLCHF"/>
<dbReference type="OrthoDB" id="6085656at2759"/>
<dbReference type="PhylomeDB" id="P70120"/>
<dbReference type="TreeFam" id="TF351373"/>
<dbReference type="BioGRID-ORCS" id="15208">
    <property type="hits" value="1 hit in 79 CRISPR screens"/>
</dbReference>
<dbReference type="PRO" id="PR:P70120"/>
<dbReference type="Proteomes" id="UP000000589">
    <property type="component" value="Chromosome 4"/>
</dbReference>
<dbReference type="RNAct" id="P70120">
    <property type="molecule type" value="protein"/>
</dbReference>
<dbReference type="Bgee" id="ENSMUSG00000048001">
    <property type="expression patterns" value="Expressed in medial ganglionic eminence and 160 other cell types or tissues"/>
</dbReference>
<dbReference type="ExpressionAtlas" id="P70120">
    <property type="expression patterns" value="baseline and differential"/>
</dbReference>
<dbReference type="GO" id="GO:0005654">
    <property type="term" value="C:nucleoplasm"/>
    <property type="evidence" value="ECO:0000304"/>
    <property type="project" value="Reactome"/>
</dbReference>
<dbReference type="GO" id="GO:0003682">
    <property type="term" value="F:chromatin binding"/>
    <property type="evidence" value="ECO:0000266"/>
    <property type="project" value="MGI"/>
</dbReference>
<dbReference type="GO" id="GO:0001227">
    <property type="term" value="F:DNA-binding transcription repressor activity, RNA polymerase II-specific"/>
    <property type="evidence" value="ECO:0000314"/>
    <property type="project" value="UniProtKB"/>
</dbReference>
<dbReference type="GO" id="GO:0046983">
    <property type="term" value="F:protein dimerization activity"/>
    <property type="evidence" value="ECO:0007669"/>
    <property type="project" value="InterPro"/>
</dbReference>
<dbReference type="GO" id="GO:1990837">
    <property type="term" value="F:sequence-specific double-stranded DNA binding"/>
    <property type="evidence" value="ECO:0007669"/>
    <property type="project" value="Ensembl"/>
</dbReference>
<dbReference type="GO" id="GO:0048708">
    <property type="term" value="P:astrocyte differentiation"/>
    <property type="evidence" value="ECO:0000314"/>
    <property type="project" value="UniProtKB"/>
</dbReference>
<dbReference type="GO" id="GO:0030509">
    <property type="term" value="P:BMP signaling pathway"/>
    <property type="evidence" value="ECO:0000316"/>
    <property type="project" value="MGI"/>
</dbReference>
<dbReference type="GO" id="GO:0007420">
    <property type="term" value="P:brain development"/>
    <property type="evidence" value="ECO:0000315"/>
    <property type="project" value="UniProtKB"/>
</dbReference>
<dbReference type="GO" id="GO:0043010">
    <property type="term" value="P:camera-type eye development"/>
    <property type="evidence" value="ECO:0000315"/>
    <property type="project" value="UniProtKB"/>
</dbReference>
<dbReference type="GO" id="GO:0051216">
    <property type="term" value="P:cartilage development"/>
    <property type="evidence" value="ECO:0000315"/>
    <property type="project" value="UniProtKB"/>
</dbReference>
<dbReference type="GO" id="GO:0007155">
    <property type="term" value="P:cell adhesion"/>
    <property type="evidence" value="ECO:0000316"/>
    <property type="project" value="MGI"/>
</dbReference>
<dbReference type="GO" id="GO:0048469">
    <property type="term" value="P:cell maturation"/>
    <property type="evidence" value="ECO:0000316"/>
    <property type="project" value="MGI"/>
</dbReference>
<dbReference type="GO" id="GO:0022010">
    <property type="term" value="P:central nervous system myelination"/>
    <property type="evidence" value="ECO:0000315"/>
    <property type="project" value="MGI"/>
</dbReference>
<dbReference type="GO" id="GO:0021953">
    <property type="term" value="P:central nervous system neuron differentiation"/>
    <property type="evidence" value="ECO:0000316"/>
    <property type="project" value="MGI"/>
</dbReference>
<dbReference type="GO" id="GO:0072049">
    <property type="term" value="P:comma-shaped body morphogenesis"/>
    <property type="evidence" value="ECO:0000270"/>
    <property type="project" value="UniProtKB"/>
</dbReference>
<dbReference type="GO" id="GO:0090162">
    <property type="term" value="P:establishment of epithelial cell polarity"/>
    <property type="evidence" value="ECO:0000316"/>
    <property type="project" value="MGI"/>
</dbReference>
<dbReference type="GO" id="GO:0021781">
    <property type="term" value="P:glial cell fate commitment"/>
    <property type="evidence" value="ECO:0000315"/>
    <property type="project" value="MGI"/>
</dbReference>
<dbReference type="GO" id="GO:0042491">
    <property type="term" value="P:inner ear auditory receptor cell differentiation"/>
    <property type="evidence" value="ECO:0000316"/>
    <property type="project" value="MGI"/>
</dbReference>
<dbReference type="GO" id="GO:0060122">
    <property type="term" value="P:inner ear receptor cell stereocilium organization"/>
    <property type="evidence" value="ECO:0000316"/>
    <property type="project" value="MGI"/>
</dbReference>
<dbReference type="GO" id="GO:0072282">
    <property type="term" value="P:metanephric nephron tubule morphogenesis"/>
    <property type="evidence" value="ECO:0000270"/>
    <property type="project" value="UniProtKB"/>
</dbReference>
<dbReference type="GO" id="GO:0048712">
    <property type="term" value="P:negative regulation of astrocyte differentiation"/>
    <property type="evidence" value="ECO:0000314"/>
    <property type="project" value="UniProtKB"/>
</dbReference>
<dbReference type="GO" id="GO:0045892">
    <property type="term" value="P:negative regulation of DNA-templated transcription"/>
    <property type="evidence" value="ECO:0000315"/>
    <property type="project" value="UniProtKB"/>
</dbReference>
<dbReference type="GO" id="GO:0045608">
    <property type="term" value="P:negative regulation of inner ear auditory receptor cell differentiation"/>
    <property type="evidence" value="ECO:0000315"/>
    <property type="project" value="MGI"/>
</dbReference>
<dbReference type="GO" id="GO:2000981">
    <property type="term" value="P:negative regulation of inner ear receptor cell differentiation"/>
    <property type="evidence" value="ECO:0000315"/>
    <property type="project" value="UniProtKB"/>
</dbReference>
<dbReference type="GO" id="GO:0045665">
    <property type="term" value="P:negative regulation of neuron differentiation"/>
    <property type="evidence" value="ECO:0000315"/>
    <property type="project" value="MGI"/>
</dbReference>
<dbReference type="GO" id="GO:0048715">
    <property type="term" value="P:negative regulation of oligodendrocyte differentiation"/>
    <property type="evidence" value="ECO:0000314"/>
    <property type="project" value="UniProtKB"/>
</dbReference>
<dbReference type="GO" id="GO:2000974">
    <property type="term" value="P:negative regulation of pro-B cell differentiation"/>
    <property type="evidence" value="ECO:0000250"/>
    <property type="project" value="UniProtKB"/>
</dbReference>
<dbReference type="GO" id="GO:2000737">
    <property type="term" value="P:negative regulation of stem cell differentiation"/>
    <property type="evidence" value="ECO:0000250"/>
    <property type="project" value="UniProtKB"/>
</dbReference>
<dbReference type="GO" id="GO:0000122">
    <property type="term" value="P:negative regulation of transcription by RNA polymerase II"/>
    <property type="evidence" value="ECO:0000315"/>
    <property type="project" value="MGI"/>
</dbReference>
<dbReference type="GO" id="GO:0021915">
    <property type="term" value="P:neural tube development"/>
    <property type="evidence" value="ECO:0000316"/>
    <property type="project" value="MGI"/>
</dbReference>
<dbReference type="GO" id="GO:0030182">
    <property type="term" value="P:neuron differentiation"/>
    <property type="evidence" value="ECO:0000315"/>
    <property type="project" value="MGI"/>
</dbReference>
<dbReference type="GO" id="GO:0097150">
    <property type="term" value="P:neuronal stem cell population maintenance"/>
    <property type="evidence" value="ECO:0000315"/>
    <property type="project" value="UniProtKB"/>
</dbReference>
<dbReference type="GO" id="GO:0007219">
    <property type="term" value="P:Notch signaling pathway"/>
    <property type="evidence" value="ECO:0000314"/>
    <property type="project" value="MGI"/>
</dbReference>
<dbReference type="GO" id="GO:0014003">
    <property type="term" value="P:oligodendrocyte development"/>
    <property type="evidence" value="ECO:0000315"/>
    <property type="project" value="MGI"/>
</dbReference>
<dbReference type="GO" id="GO:0048709">
    <property type="term" value="P:oligodendrocyte differentiation"/>
    <property type="evidence" value="ECO:0000315"/>
    <property type="project" value="MGI"/>
</dbReference>
<dbReference type="GO" id="GO:0030513">
    <property type="term" value="P:positive regulation of BMP signaling pathway"/>
    <property type="evidence" value="ECO:0000316"/>
    <property type="project" value="MGI"/>
</dbReference>
<dbReference type="GO" id="GO:0008284">
    <property type="term" value="P:positive regulation of cell population proliferation"/>
    <property type="evidence" value="ECO:0000250"/>
    <property type="project" value="UniProtKB"/>
</dbReference>
<dbReference type="GO" id="GO:0045893">
    <property type="term" value="P:positive regulation of DNA-templated transcription"/>
    <property type="evidence" value="ECO:0000315"/>
    <property type="project" value="UniProtKB"/>
</dbReference>
<dbReference type="GO" id="GO:0045747">
    <property type="term" value="P:positive regulation of Notch signaling pathway"/>
    <property type="evidence" value="ECO:0000315"/>
    <property type="project" value="UniProtKB"/>
</dbReference>
<dbReference type="GO" id="GO:0046427">
    <property type="term" value="P:positive regulation of receptor signaling pathway via JAK-STAT"/>
    <property type="evidence" value="ECO:0000314"/>
    <property type="project" value="UniProtKB"/>
</dbReference>
<dbReference type="GO" id="GO:0048661">
    <property type="term" value="P:positive regulation of smooth muscle cell proliferation"/>
    <property type="evidence" value="ECO:0000250"/>
    <property type="project" value="UniProtKB"/>
</dbReference>
<dbReference type="GO" id="GO:0045944">
    <property type="term" value="P:positive regulation of transcription by RNA polymerase II"/>
    <property type="evidence" value="ECO:0000316"/>
    <property type="project" value="MGI"/>
</dbReference>
<dbReference type="GO" id="GO:0065003">
    <property type="term" value="P:protein-containing complex assembly"/>
    <property type="evidence" value="ECO:0000314"/>
    <property type="project" value="UniProtKB"/>
</dbReference>
<dbReference type="GO" id="GO:0045595">
    <property type="term" value="P:regulation of cell differentiation"/>
    <property type="evidence" value="ECO:0000315"/>
    <property type="project" value="MGI"/>
</dbReference>
<dbReference type="GO" id="GO:0050678">
    <property type="term" value="P:regulation of epithelial cell proliferation"/>
    <property type="evidence" value="ECO:0000316"/>
    <property type="project" value="MGI"/>
</dbReference>
<dbReference type="GO" id="GO:0031641">
    <property type="term" value="P:regulation of myelination"/>
    <property type="evidence" value="ECO:0000315"/>
    <property type="project" value="MGI"/>
</dbReference>
<dbReference type="GO" id="GO:0050767">
    <property type="term" value="P:regulation of neurogenesis"/>
    <property type="evidence" value="ECO:0000316"/>
    <property type="project" value="MGI"/>
</dbReference>
<dbReference type="GO" id="GO:0045664">
    <property type="term" value="P:regulation of neuron differentiation"/>
    <property type="evidence" value="ECO:0000316"/>
    <property type="project" value="MGI"/>
</dbReference>
<dbReference type="GO" id="GO:0072050">
    <property type="term" value="P:S-shaped body morphogenesis"/>
    <property type="evidence" value="ECO:0000270"/>
    <property type="project" value="UniProtKB"/>
</dbReference>
<dbReference type="GO" id="GO:0007224">
    <property type="term" value="P:smoothened signaling pathway"/>
    <property type="evidence" value="ECO:0000314"/>
    <property type="project" value="MGI"/>
</dbReference>
<dbReference type="GO" id="GO:0072086">
    <property type="term" value="P:specification of loop of Henle identity"/>
    <property type="evidence" value="ECO:0000270"/>
    <property type="project" value="UniProtKB"/>
</dbReference>
<dbReference type="GO" id="GO:0021537">
    <property type="term" value="P:telencephalon development"/>
    <property type="evidence" value="ECO:0000316"/>
    <property type="project" value="MGI"/>
</dbReference>
<dbReference type="CDD" id="cd11461">
    <property type="entry name" value="bHLH-O_HES5"/>
    <property type="match status" value="1"/>
</dbReference>
<dbReference type="FunFam" id="4.10.280.10:FF:000033">
    <property type="entry name" value="Transcription factor HES-5"/>
    <property type="match status" value="1"/>
</dbReference>
<dbReference type="Gene3D" id="4.10.280.10">
    <property type="entry name" value="Helix-loop-helix DNA-binding domain"/>
    <property type="match status" value="1"/>
</dbReference>
<dbReference type="InterPro" id="IPR011598">
    <property type="entry name" value="bHLH_dom"/>
</dbReference>
<dbReference type="InterPro" id="IPR050370">
    <property type="entry name" value="HES_HEY"/>
</dbReference>
<dbReference type="InterPro" id="IPR036638">
    <property type="entry name" value="HLH_DNA-bd_sf"/>
</dbReference>
<dbReference type="InterPro" id="IPR003650">
    <property type="entry name" value="Orange_dom"/>
</dbReference>
<dbReference type="PANTHER" id="PTHR10985">
    <property type="entry name" value="BASIC HELIX-LOOP-HELIX TRANSCRIPTION FACTOR, HES-RELATED"/>
    <property type="match status" value="1"/>
</dbReference>
<dbReference type="Pfam" id="PF07527">
    <property type="entry name" value="Hairy_orange"/>
    <property type="match status" value="1"/>
</dbReference>
<dbReference type="Pfam" id="PF00010">
    <property type="entry name" value="HLH"/>
    <property type="match status" value="1"/>
</dbReference>
<dbReference type="SMART" id="SM00353">
    <property type="entry name" value="HLH"/>
    <property type="match status" value="1"/>
</dbReference>
<dbReference type="SMART" id="SM00511">
    <property type="entry name" value="ORANGE"/>
    <property type="match status" value="1"/>
</dbReference>
<dbReference type="SUPFAM" id="SSF47459">
    <property type="entry name" value="HLH, helix-loop-helix DNA-binding domain"/>
    <property type="match status" value="1"/>
</dbReference>
<dbReference type="PROSITE" id="PS50888">
    <property type="entry name" value="BHLH"/>
    <property type="match status" value="1"/>
</dbReference>
<dbReference type="PROSITE" id="PS51054">
    <property type="entry name" value="ORANGE"/>
    <property type="match status" value="1"/>
</dbReference>
<name>HES5_MOUSE</name>
<comment type="function">
    <text evidence="5">Transcriptional repressor of genes that require a bHLH protein for their transcription. Plays an important role as neurogenesis negative regulator.</text>
</comment>
<comment type="subunit">
    <text evidence="1">Transcription repression requires formation of a complex with a corepressor protein of the Groucho/TLE family.</text>
</comment>
<comment type="subcellular location">
    <subcellularLocation>
        <location>Nucleus</location>
    </subcellularLocation>
</comment>
<comment type="domain">
    <text>Has a particular type of basic domain (presence of a helix-interrupting proline) that binds to the N-box (CACNAG), rather than the canonical E-box (CANNTG).</text>
</comment>
<comment type="domain">
    <text evidence="1">The C-terminal WRPW motif is a transcriptional repression domain necessary for the interaction with Groucho/TLE family members, transcriptional corepressors recruited to specific target DNA by Hairy-related proteins.</text>
</comment>
<proteinExistence type="evidence at protein level"/>
<sequence length="167" mass="18425">MAPSTVAVEMLSPKEKNRLRKPVVEKMRRDRINSSIEQLKLLLEQEFARHQPNSKLEKADILEMAVSYLKHSKAFAAAAGPKSLHQDYSEGYSWCLQEAVQFLTLHAASDTQMKLLYHFQRPPAPAAPAKEPPAPGAAPQPARSSAKAAAAAVSTSRQPACGLWRPW</sequence>
<reference key="1">
    <citation type="journal article" date="1995" name="J. Biol. Chem.">
        <title>Structure and promoter analysis of the gene encoding the mouse helix-loop-helix factor HES-5. Identification of the neural precursor cell-specific promoter element.</title>
        <authorList>
            <person name="Takebayashi K."/>
            <person name="Akazawa C."/>
            <person name="Nakanishi S."/>
            <person name="Kageyama R."/>
        </authorList>
    </citation>
    <scope>NUCLEOTIDE SEQUENCE [GENOMIC DNA]</scope>
    <source>
        <strain>129/Sv</strain>
        <tissue>Liver</tissue>
    </source>
</reference>
<reference key="2">
    <citation type="journal article" date="2005" name="Science">
        <title>The transcriptional landscape of the mammalian genome.</title>
        <authorList>
            <person name="Carninci P."/>
            <person name="Kasukawa T."/>
            <person name="Katayama S."/>
            <person name="Gough J."/>
            <person name="Frith M.C."/>
            <person name="Maeda N."/>
            <person name="Oyama R."/>
            <person name="Ravasi T."/>
            <person name="Lenhard B."/>
            <person name="Wells C."/>
            <person name="Kodzius R."/>
            <person name="Shimokawa K."/>
            <person name="Bajic V.B."/>
            <person name="Brenner S.E."/>
            <person name="Batalov S."/>
            <person name="Forrest A.R."/>
            <person name="Zavolan M."/>
            <person name="Davis M.J."/>
            <person name="Wilming L.G."/>
            <person name="Aidinis V."/>
            <person name="Allen J.E."/>
            <person name="Ambesi-Impiombato A."/>
            <person name="Apweiler R."/>
            <person name="Aturaliya R.N."/>
            <person name="Bailey T.L."/>
            <person name="Bansal M."/>
            <person name="Baxter L."/>
            <person name="Beisel K.W."/>
            <person name="Bersano T."/>
            <person name="Bono H."/>
            <person name="Chalk A.M."/>
            <person name="Chiu K.P."/>
            <person name="Choudhary V."/>
            <person name="Christoffels A."/>
            <person name="Clutterbuck D.R."/>
            <person name="Crowe M.L."/>
            <person name="Dalla E."/>
            <person name="Dalrymple B.P."/>
            <person name="de Bono B."/>
            <person name="Della Gatta G."/>
            <person name="di Bernardo D."/>
            <person name="Down T."/>
            <person name="Engstrom P."/>
            <person name="Fagiolini M."/>
            <person name="Faulkner G."/>
            <person name="Fletcher C.F."/>
            <person name="Fukushima T."/>
            <person name="Furuno M."/>
            <person name="Futaki S."/>
            <person name="Gariboldi M."/>
            <person name="Georgii-Hemming P."/>
            <person name="Gingeras T.R."/>
            <person name="Gojobori T."/>
            <person name="Green R.E."/>
            <person name="Gustincich S."/>
            <person name="Harbers M."/>
            <person name="Hayashi Y."/>
            <person name="Hensch T.K."/>
            <person name="Hirokawa N."/>
            <person name="Hill D."/>
            <person name="Huminiecki L."/>
            <person name="Iacono M."/>
            <person name="Ikeo K."/>
            <person name="Iwama A."/>
            <person name="Ishikawa T."/>
            <person name="Jakt M."/>
            <person name="Kanapin A."/>
            <person name="Katoh M."/>
            <person name="Kawasawa Y."/>
            <person name="Kelso J."/>
            <person name="Kitamura H."/>
            <person name="Kitano H."/>
            <person name="Kollias G."/>
            <person name="Krishnan S.P."/>
            <person name="Kruger A."/>
            <person name="Kummerfeld S.K."/>
            <person name="Kurochkin I.V."/>
            <person name="Lareau L.F."/>
            <person name="Lazarevic D."/>
            <person name="Lipovich L."/>
            <person name="Liu J."/>
            <person name="Liuni S."/>
            <person name="McWilliam S."/>
            <person name="Madan Babu M."/>
            <person name="Madera M."/>
            <person name="Marchionni L."/>
            <person name="Matsuda H."/>
            <person name="Matsuzawa S."/>
            <person name="Miki H."/>
            <person name="Mignone F."/>
            <person name="Miyake S."/>
            <person name="Morris K."/>
            <person name="Mottagui-Tabar S."/>
            <person name="Mulder N."/>
            <person name="Nakano N."/>
            <person name="Nakauchi H."/>
            <person name="Ng P."/>
            <person name="Nilsson R."/>
            <person name="Nishiguchi S."/>
            <person name="Nishikawa S."/>
            <person name="Nori F."/>
            <person name="Ohara O."/>
            <person name="Okazaki Y."/>
            <person name="Orlando V."/>
            <person name="Pang K.C."/>
            <person name="Pavan W.J."/>
            <person name="Pavesi G."/>
            <person name="Pesole G."/>
            <person name="Petrovsky N."/>
            <person name="Piazza S."/>
            <person name="Reed J."/>
            <person name="Reid J.F."/>
            <person name="Ring B.Z."/>
            <person name="Ringwald M."/>
            <person name="Rost B."/>
            <person name="Ruan Y."/>
            <person name="Salzberg S.L."/>
            <person name="Sandelin A."/>
            <person name="Schneider C."/>
            <person name="Schoenbach C."/>
            <person name="Sekiguchi K."/>
            <person name="Semple C.A."/>
            <person name="Seno S."/>
            <person name="Sessa L."/>
            <person name="Sheng Y."/>
            <person name="Shibata Y."/>
            <person name="Shimada H."/>
            <person name="Shimada K."/>
            <person name="Silva D."/>
            <person name="Sinclair B."/>
            <person name="Sperling S."/>
            <person name="Stupka E."/>
            <person name="Sugiura K."/>
            <person name="Sultana R."/>
            <person name="Takenaka Y."/>
            <person name="Taki K."/>
            <person name="Tammoja K."/>
            <person name="Tan S.L."/>
            <person name="Tang S."/>
            <person name="Taylor M.S."/>
            <person name="Tegner J."/>
            <person name="Teichmann S.A."/>
            <person name="Ueda H.R."/>
            <person name="van Nimwegen E."/>
            <person name="Verardo R."/>
            <person name="Wei C.L."/>
            <person name="Yagi K."/>
            <person name="Yamanishi H."/>
            <person name="Zabarovsky E."/>
            <person name="Zhu S."/>
            <person name="Zimmer A."/>
            <person name="Hide W."/>
            <person name="Bult C."/>
            <person name="Grimmond S.M."/>
            <person name="Teasdale R.D."/>
            <person name="Liu E.T."/>
            <person name="Brusic V."/>
            <person name="Quackenbush J."/>
            <person name="Wahlestedt C."/>
            <person name="Mattick J.S."/>
            <person name="Hume D.A."/>
            <person name="Kai C."/>
            <person name="Sasaki D."/>
            <person name="Tomaru Y."/>
            <person name="Fukuda S."/>
            <person name="Kanamori-Katayama M."/>
            <person name="Suzuki M."/>
            <person name="Aoki J."/>
            <person name="Arakawa T."/>
            <person name="Iida J."/>
            <person name="Imamura K."/>
            <person name="Itoh M."/>
            <person name="Kato T."/>
            <person name="Kawaji H."/>
            <person name="Kawagashira N."/>
            <person name="Kawashima T."/>
            <person name="Kojima M."/>
            <person name="Kondo S."/>
            <person name="Konno H."/>
            <person name="Nakano K."/>
            <person name="Ninomiya N."/>
            <person name="Nishio T."/>
            <person name="Okada M."/>
            <person name="Plessy C."/>
            <person name="Shibata K."/>
            <person name="Shiraki T."/>
            <person name="Suzuki S."/>
            <person name="Tagami M."/>
            <person name="Waki K."/>
            <person name="Watahiki A."/>
            <person name="Okamura-Oho Y."/>
            <person name="Suzuki H."/>
            <person name="Kawai J."/>
            <person name="Hayashizaki Y."/>
        </authorList>
    </citation>
    <scope>NUCLEOTIDE SEQUENCE [LARGE SCALE MRNA]</scope>
    <source>
        <strain>C57BL/6J</strain>
        <tissue>Eye</tissue>
        <tissue>Olfactory bulb</tissue>
    </source>
</reference>
<reference key="3">
    <citation type="journal article" date="2012" name="Nat. Neurosci.">
        <title>BCL6 controls neurogenesis through Sirt1-dependent epigenetic repression of selective Notch targets.</title>
        <authorList>
            <person name="Tiberi L."/>
            <person name="van den Ameele J."/>
            <person name="Dimidschstein J."/>
            <person name="Piccirilli J."/>
            <person name="Gall D."/>
            <person name="Herpoel A."/>
            <person name="Bilheu A."/>
            <person name="Bonnefont J."/>
            <person name="Iacovino M."/>
            <person name="Kyba M."/>
            <person name="Bouschet T."/>
            <person name="Vanderhaeghen P."/>
        </authorList>
    </citation>
    <scope>FUNCTION AS NEUROGENESIS REPRESSOR</scope>
</reference>
<evidence type="ECO:0000250" key="1"/>
<evidence type="ECO:0000255" key="2">
    <source>
        <dbReference type="PROSITE-ProRule" id="PRU00380"/>
    </source>
</evidence>
<evidence type="ECO:0000255" key="3">
    <source>
        <dbReference type="PROSITE-ProRule" id="PRU00981"/>
    </source>
</evidence>
<evidence type="ECO:0000256" key="4">
    <source>
        <dbReference type="SAM" id="MobiDB-lite"/>
    </source>
</evidence>
<evidence type="ECO:0000269" key="5">
    <source>
    </source>
</evidence>
<evidence type="ECO:0000305" key="6"/>
<gene>
    <name type="primary">Hes5</name>
    <name type="synonym">Hes-5</name>
</gene>
<feature type="chain" id="PRO_0000127212" description="Transcription factor HES-5">
    <location>
        <begin position="1"/>
        <end position="167"/>
    </location>
</feature>
<feature type="domain" description="bHLH" evidence="3">
    <location>
        <begin position="16"/>
        <end position="72"/>
    </location>
</feature>
<feature type="domain" description="Orange" evidence="2">
    <location>
        <begin position="88"/>
        <end position="119"/>
    </location>
</feature>
<feature type="region of interest" description="Disordered" evidence="4">
    <location>
        <begin position="124"/>
        <end position="167"/>
    </location>
</feature>
<feature type="short sequence motif" description="WRPW motif">
    <location>
        <begin position="164"/>
        <end position="167"/>
    </location>
</feature>
<feature type="compositionally biased region" description="Pro residues" evidence="4">
    <location>
        <begin position="124"/>
        <end position="138"/>
    </location>
</feature>
<feature type="compositionally biased region" description="Low complexity" evidence="4">
    <location>
        <begin position="139"/>
        <end position="160"/>
    </location>
</feature>
<feature type="sequence conflict" description="In Ref. 2; BAC37159." evidence="6" ref="2">
    <original>P</original>
    <variation>S</variation>
    <location>
        <position position="22"/>
    </location>
</feature>
<feature type="sequence conflict" description="In Ref. 2; BAC37159." evidence="6" ref="2">
    <original>W</original>
    <variation>L</variation>
    <location>
        <position position="94"/>
    </location>
</feature>
<keyword id="KW-0217">Developmental protein</keyword>
<keyword id="KW-0221">Differentiation</keyword>
<keyword id="KW-0238">DNA-binding</keyword>
<keyword id="KW-0524">Neurogenesis</keyword>
<keyword id="KW-0539">Nucleus</keyword>
<keyword id="KW-1185">Reference proteome</keyword>
<keyword id="KW-0678">Repressor</keyword>
<keyword id="KW-0804">Transcription</keyword>
<keyword id="KW-0805">Transcription regulation</keyword>